<name>RS6_RICCK</name>
<accession>A8EXA7</accession>
<proteinExistence type="inferred from homology"/>
<reference key="1">
    <citation type="submission" date="2007-09" db="EMBL/GenBank/DDBJ databases">
        <title>Complete genome sequence of Rickettsia canadensis.</title>
        <authorList>
            <person name="Madan A."/>
            <person name="Fahey J."/>
            <person name="Helton E."/>
            <person name="Ketteman M."/>
            <person name="Madan A."/>
            <person name="Rodrigues S."/>
            <person name="Sanchez A."/>
            <person name="Whiting M."/>
            <person name="Dasch G."/>
            <person name="Eremeeva M."/>
        </authorList>
    </citation>
    <scope>NUCLEOTIDE SEQUENCE [LARGE SCALE GENOMIC DNA]</scope>
    <source>
        <strain>McKiel</strain>
    </source>
</reference>
<comment type="function">
    <text evidence="1">Binds together with bS18 to 16S ribosomal RNA.</text>
</comment>
<comment type="similarity">
    <text evidence="1">Belongs to the bacterial ribosomal protein bS6 family.</text>
</comment>
<feature type="chain" id="PRO_1000005337" description="Small ribosomal subunit protein bS6">
    <location>
        <begin position="1"/>
        <end position="121"/>
    </location>
</feature>
<gene>
    <name evidence="1" type="primary">rpsF</name>
    <name type="ordered locus">A1E_00185</name>
</gene>
<organism>
    <name type="scientific">Rickettsia canadensis (strain McKiel)</name>
    <dbReference type="NCBI Taxonomy" id="293613"/>
    <lineage>
        <taxon>Bacteria</taxon>
        <taxon>Pseudomonadati</taxon>
        <taxon>Pseudomonadota</taxon>
        <taxon>Alphaproteobacteria</taxon>
        <taxon>Rickettsiales</taxon>
        <taxon>Rickettsiaceae</taxon>
        <taxon>Rickettsieae</taxon>
        <taxon>Rickettsia</taxon>
        <taxon>belli group</taxon>
    </lineage>
</organism>
<protein>
    <recommendedName>
        <fullName evidence="1">Small ribosomal subunit protein bS6</fullName>
    </recommendedName>
    <alternativeName>
        <fullName evidence="2">30S ribosomal protein S6</fullName>
    </alternativeName>
</protein>
<dbReference type="EMBL" id="CP000409">
    <property type="protein sequence ID" value="ABV72990.1"/>
    <property type="molecule type" value="Genomic_DNA"/>
</dbReference>
<dbReference type="RefSeq" id="WP_012148191.1">
    <property type="nucleotide sequence ID" value="NC_009879.1"/>
</dbReference>
<dbReference type="SMR" id="A8EXA7"/>
<dbReference type="STRING" id="293613.A1E_00185"/>
<dbReference type="KEGG" id="rcm:A1E_00185"/>
<dbReference type="eggNOG" id="COG0360">
    <property type="taxonomic scope" value="Bacteria"/>
</dbReference>
<dbReference type="HOGENOM" id="CLU_113441_2_0_5"/>
<dbReference type="Proteomes" id="UP000007056">
    <property type="component" value="Chromosome"/>
</dbReference>
<dbReference type="GO" id="GO:0005737">
    <property type="term" value="C:cytoplasm"/>
    <property type="evidence" value="ECO:0007669"/>
    <property type="project" value="UniProtKB-ARBA"/>
</dbReference>
<dbReference type="GO" id="GO:1990904">
    <property type="term" value="C:ribonucleoprotein complex"/>
    <property type="evidence" value="ECO:0007669"/>
    <property type="project" value="UniProtKB-KW"/>
</dbReference>
<dbReference type="GO" id="GO:0005840">
    <property type="term" value="C:ribosome"/>
    <property type="evidence" value="ECO:0007669"/>
    <property type="project" value="UniProtKB-KW"/>
</dbReference>
<dbReference type="GO" id="GO:0070181">
    <property type="term" value="F:small ribosomal subunit rRNA binding"/>
    <property type="evidence" value="ECO:0007669"/>
    <property type="project" value="TreeGrafter"/>
</dbReference>
<dbReference type="GO" id="GO:0003735">
    <property type="term" value="F:structural constituent of ribosome"/>
    <property type="evidence" value="ECO:0007669"/>
    <property type="project" value="InterPro"/>
</dbReference>
<dbReference type="GO" id="GO:0006412">
    <property type="term" value="P:translation"/>
    <property type="evidence" value="ECO:0007669"/>
    <property type="project" value="UniProtKB-UniRule"/>
</dbReference>
<dbReference type="CDD" id="cd00473">
    <property type="entry name" value="bS6"/>
    <property type="match status" value="1"/>
</dbReference>
<dbReference type="Gene3D" id="3.30.70.60">
    <property type="match status" value="1"/>
</dbReference>
<dbReference type="HAMAP" id="MF_00360">
    <property type="entry name" value="Ribosomal_bS6"/>
    <property type="match status" value="1"/>
</dbReference>
<dbReference type="InterPro" id="IPR000529">
    <property type="entry name" value="Ribosomal_bS6"/>
</dbReference>
<dbReference type="InterPro" id="IPR035980">
    <property type="entry name" value="Ribosomal_bS6_sf"/>
</dbReference>
<dbReference type="InterPro" id="IPR020814">
    <property type="entry name" value="Ribosomal_S6_plastid/chlpt"/>
</dbReference>
<dbReference type="InterPro" id="IPR014717">
    <property type="entry name" value="Transl_elong_EF1B/ribsomal_bS6"/>
</dbReference>
<dbReference type="NCBIfam" id="TIGR00166">
    <property type="entry name" value="S6"/>
    <property type="match status" value="1"/>
</dbReference>
<dbReference type="PANTHER" id="PTHR21011">
    <property type="entry name" value="MITOCHONDRIAL 28S RIBOSOMAL PROTEIN S6"/>
    <property type="match status" value="1"/>
</dbReference>
<dbReference type="PANTHER" id="PTHR21011:SF1">
    <property type="entry name" value="SMALL RIBOSOMAL SUBUNIT PROTEIN BS6M"/>
    <property type="match status" value="1"/>
</dbReference>
<dbReference type="Pfam" id="PF01250">
    <property type="entry name" value="Ribosomal_S6"/>
    <property type="match status" value="1"/>
</dbReference>
<dbReference type="SUPFAM" id="SSF54995">
    <property type="entry name" value="Ribosomal protein S6"/>
    <property type="match status" value="1"/>
</dbReference>
<evidence type="ECO:0000255" key="1">
    <source>
        <dbReference type="HAMAP-Rule" id="MF_00360"/>
    </source>
</evidence>
<evidence type="ECO:0000305" key="2"/>
<sequence>MSFYESVFIIRQDISLNDIDKIVDDFAKIIKDNNGTIIKKEYWGLRTLAYKIGSNKKGHYYFLGLDITPNVKEEIERKMKLNENIIRFLTIKADAISSEPSPMLKNQSTENNLVIDVTINN</sequence>
<keyword id="KW-0687">Ribonucleoprotein</keyword>
<keyword id="KW-0689">Ribosomal protein</keyword>
<keyword id="KW-0694">RNA-binding</keyword>
<keyword id="KW-0699">rRNA-binding</keyword>